<reference key="1">
    <citation type="journal article" date="1996" name="Proc. Natl. Acad. Sci. U.S.A.">
        <title>Characterization of serum amyloid A protein mRNA expression and secondary amyloidosis in the domestic duck.</title>
        <authorList>
            <person name="Guo J.T."/>
            <person name="Aldrich C."/>
            <person name="Mason W.S."/>
            <person name="Pugh J.C."/>
        </authorList>
    </citation>
    <scope>NUCLEOTIDE SEQUENCE [GENOMIC DNA / MRNA]</scope>
    <source>
        <strain>Pekin breed</strain>
        <tissue>Liver</tissue>
    </source>
</reference>
<reference key="2">
    <citation type="journal article" date="1987" name="FEBS Lett.">
        <title>Primary structure of duck amyloid protein A. The form deposited in tissues may be identical to its serum precursor.</title>
        <authorList>
            <person name="Ericsson L.H."/>
            <person name="Eriksen N."/>
            <person name="Walsh K.A."/>
            <person name="Benditt E.P."/>
        </authorList>
    </citation>
    <scope>PROTEIN SEQUENCE OF 19-124</scope>
</reference>
<reference key="3">
    <citation type="journal article" date="1977" name="J. Immunol.">
        <title>The amino acid sequence of duck amyloid A (AA) protein.</title>
        <authorList>
            <person name="Gorevic P.D."/>
            <person name="Greenwald M."/>
            <person name="Frangione B."/>
            <person name="Pras M."/>
            <person name="Franklin E.C."/>
        </authorList>
    </citation>
    <scope>PROTEIN SEQUENCE OF 19-99</scope>
</reference>
<comment type="function">
    <text>Major acute phase reactant. Apolipoprotein of the HDL complex.</text>
</comment>
<comment type="subcellular location">
    <subcellularLocation>
        <location>Secreted</location>
    </subcellularLocation>
</comment>
<comment type="tissue specificity">
    <text>Expressed by the liver; secreted in plasma. Also present in the liver and lung irrespective of induction.</text>
</comment>
<comment type="induction">
    <text>Upon cytokine stimulation.</text>
</comment>
<comment type="PTM">
    <text>This protein is the precursor of amyloid protein A, which is formed by the removal of approximately 3 residues from the C-terminal end.</text>
</comment>
<comment type="polymorphism">
    <text>At least two alleles exist. The sequence of the B allele is shown here.</text>
</comment>
<comment type="disease">
    <text>Reactive, secondary amyloidosis is characterized by the extracellular accumulation in various tissues of the SAA protein. These deposits are highly insoluble and resistant to proteolysis; they disrupt tissue structure and compromise function.</text>
</comment>
<comment type="similarity">
    <text evidence="4">Belongs to the SAA family.</text>
</comment>
<proteinExistence type="evidence at protein level"/>
<name>SAA_ANAPL</name>
<feature type="signal peptide" evidence="2 3">
    <location>
        <begin position="1"/>
        <end position="18"/>
    </location>
</feature>
<feature type="chain" id="PRO_0000031567" description="Serum amyloid A protein">
    <location>
        <begin position="19"/>
        <end position="127"/>
    </location>
</feature>
<feature type="region of interest" description="Disordered" evidence="1">
    <location>
        <begin position="88"/>
        <end position="127"/>
    </location>
</feature>
<feature type="sequence variant" description="In allele A.">
    <original>G</original>
    <variation>S</variation>
    <location>
        <position position="89"/>
    </location>
</feature>
<feature type="sequence variant" description="In allele A.">
    <original>A</original>
    <variation>V</variation>
    <location>
        <position position="107"/>
    </location>
</feature>
<feature type="sequence conflict" description="In Ref. 3; AA sequence." evidence="4" ref="3">
    <original>SD</original>
    <variation>AN</variation>
    <location>
        <begin position="81"/>
        <end position="82"/>
    </location>
</feature>
<feature type="sequence conflict" description="In Ref. 3; AA sequence." evidence="4" ref="3">
    <location>
        <position position="93"/>
    </location>
</feature>
<feature type="sequence conflict" description="In Ref. 3; AA sequence." evidence="4" ref="3">
    <original>T</original>
    <variation>R</variation>
    <location>
        <position position="99"/>
    </location>
</feature>
<evidence type="ECO:0000256" key="1">
    <source>
        <dbReference type="SAM" id="MobiDB-lite"/>
    </source>
</evidence>
<evidence type="ECO:0000269" key="2">
    <source>
    </source>
</evidence>
<evidence type="ECO:0000269" key="3">
    <source>
    </source>
</evidence>
<evidence type="ECO:0000305" key="4"/>
<organism>
    <name type="scientific">Anas platyrhynchos</name>
    <name type="common">Mallard</name>
    <name type="synonym">Anas boschas</name>
    <dbReference type="NCBI Taxonomy" id="8839"/>
    <lineage>
        <taxon>Eukaryota</taxon>
        <taxon>Metazoa</taxon>
        <taxon>Chordata</taxon>
        <taxon>Craniata</taxon>
        <taxon>Vertebrata</taxon>
        <taxon>Euteleostomi</taxon>
        <taxon>Archelosauria</taxon>
        <taxon>Archosauria</taxon>
        <taxon>Dinosauria</taxon>
        <taxon>Saurischia</taxon>
        <taxon>Theropoda</taxon>
        <taxon>Coelurosauria</taxon>
        <taxon>Aves</taxon>
        <taxon>Neognathae</taxon>
        <taxon>Galloanserae</taxon>
        <taxon>Anseriformes</taxon>
        <taxon>Anatidae</taxon>
        <taxon>Anatinae</taxon>
        <taxon>Anas</taxon>
    </lineage>
</organism>
<protein>
    <recommendedName>
        <fullName>Serum amyloid A protein</fullName>
        <shortName>SAA</shortName>
    </recommendedName>
</protein>
<dbReference type="EMBL" id="U59909">
    <property type="protein sequence ID" value="AAC60058.1"/>
    <property type="molecule type" value="Genomic_DNA"/>
</dbReference>
<dbReference type="EMBL" id="U59908">
    <property type="protein sequence ID" value="AAC60057.1"/>
    <property type="molecule type" value="mRNA"/>
</dbReference>
<dbReference type="EMBL" id="U64985">
    <property type="protein sequence ID" value="AAC60059.1"/>
    <property type="molecule type" value="Genomic_DNA"/>
</dbReference>
<dbReference type="PIR" id="A03200">
    <property type="entry name" value="YLDKA"/>
</dbReference>
<dbReference type="PIR" id="A27227">
    <property type="entry name" value="A27227"/>
</dbReference>
<dbReference type="RefSeq" id="NP_001297733.1">
    <property type="nucleotide sequence ID" value="NM_001310804.1"/>
</dbReference>
<dbReference type="RefSeq" id="XP_005028466.2">
    <property type="nucleotide sequence ID" value="XM_005028409.2"/>
</dbReference>
<dbReference type="SMR" id="P02740"/>
<dbReference type="GeneID" id="101798523"/>
<dbReference type="KEGG" id="apla:101798523"/>
<dbReference type="CTD" id="6289"/>
<dbReference type="OrthoDB" id="6112826at2759"/>
<dbReference type="Proteomes" id="UP000694400">
    <property type="component" value="Unplaced"/>
</dbReference>
<dbReference type="GO" id="GO:0034364">
    <property type="term" value="C:high-density lipoprotein particle"/>
    <property type="evidence" value="ECO:0007669"/>
    <property type="project" value="UniProtKB-KW"/>
</dbReference>
<dbReference type="GO" id="GO:0006953">
    <property type="term" value="P:acute-phase response"/>
    <property type="evidence" value="ECO:0007669"/>
    <property type="project" value="UniProtKB-KW"/>
</dbReference>
<dbReference type="FunFam" id="1.10.132.110:FF:000001">
    <property type="entry name" value="Serum amyloid A protein"/>
    <property type="match status" value="1"/>
</dbReference>
<dbReference type="Gene3D" id="1.10.132.110">
    <property type="entry name" value="Serum amyloid A protein"/>
    <property type="match status" value="1"/>
</dbReference>
<dbReference type="InterPro" id="IPR000096">
    <property type="entry name" value="Serum_amyloid_A"/>
</dbReference>
<dbReference type="InterPro" id="IPR052464">
    <property type="entry name" value="Synovial_Prolif_Regulator"/>
</dbReference>
<dbReference type="PANTHER" id="PTHR23424">
    <property type="entry name" value="SERUM AMYLOID A"/>
    <property type="match status" value="1"/>
</dbReference>
<dbReference type="PANTHER" id="PTHR23424:SF29">
    <property type="entry name" value="SERUM AMYLOID A PROTEIN"/>
    <property type="match status" value="1"/>
</dbReference>
<dbReference type="Pfam" id="PF00277">
    <property type="entry name" value="SAA"/>
    <property type="match status" value="1"/>
</dbReference>
<dbReference type="PIRSF" id="PIRSF002472">
    <property type="entry name" value="Serum_amyloid_A"/>
    <property type="match status" value="1"/>
</dbReference>
<dbReference type="PRINTS" id="PR00306">
    <property type="entry name" value="SERUMAMYLOID"/>
</dbReference>
<dbReference type="SMART" id="SM00197">
    <property type="entry name" value="SAA"/>
    <property type="match status" value="1"/>
</dbReference>
<dbReference type="PROSITE" id="PS00992">
    <property type="entry name" value="SAA"/>
    <property type="match status" value="1"/>
</dbReference>
<keyword id="KW-0011">Acute phase</keyword>
<keyword id="KW-0034">Amyloid</keyword>
<keyword id="KW-0903">Direct protein sequencing</keyword>
<keyword id="KW-0345">HDL</keyword>
<keyword id="KW-0964">Secreted</keyword>
<keyword id="KW-0732">Signal</keyword>
<accession>P02740</accession>
<accession>Q92034</accession>
<sequence>MRLCICFVLLAVIVCASADNPFTRGGRFVLDAAGGAWDMLRAYRDMREANHIGADKYFHARGNYDAARRGPGGAWAARVISDARENWQGGVSGRGAEDTRADQEANAWGRNGGDPNRYRPPGLPSKY</sequence>